<accession>A8LKY0</accession>
<reference key="1">
    <citation type="journal article" date="2010" name="ISME J.">
        <title>The complete genome sequence of the algal symbiont Dinoroseobacter shibae: a hitchhiker's guide to life in the sea.</title>
        <authorList>
            <person name="Wagner-Dobler I."/>
            <person name="Ballhausen B."/>
            <person name="Berger M."/>
            <person name="Brinkhoff T."/>
            <person name="Buchholz I."/>
            <person name="Bunk B."/>
            <person name="Cypionka H."/>
            <person name="Daniel R."/>
            <person name="Drepper T."/>
            <person name="Gerdts G."/>
            <person name="Hahnke S."/>
            <person name="Han C."/>
            <person name="Jahn D."/>
            <person name="Kalhoefer D."/>
            <person name="Kiss H."/>
            <person name="Klenk H.P."/>
            <person name="Kyrpides N."/>
            <person name="Liebl W."/>
            <person name="Liesegang H."/>
            <person name="Meincke L."/>
            <person name="Pati A."/>
            <person name="Petersen J."/>
            <person name="Piekarski T."/>
            <person name="Pommerenke C."/>
            <person name="Pradella S."/>
            <person name="Pukall R."/>
            <person name="Rabus R."/>
            <person name="Stackebrandt E."/>
            <person name="Thole S."/>
            <person name="Thompson L."/>
            <person name="Tielen P."/>
            <person name="Tomasch J."/>
            <person name="von Jan M."/>
            <person name="Wanphrut N."/>
            <person name="Wichels A."/>
            <person name="Zech H."/>
            <person name="Simon M."/>
        </authorList>
    </citation>
    <scope>NUCLEOTIDE SEQUENCE [LARGE SCALE GENOMIC DNA]</scope>
    <source>
        <strain>DSM 16493 / NCIMB 14021 / DFL 12</strain>
    </source>
</reference>
<gene>
    <name evidence="1" type="primary">rplM</name>
    <name type="ordered locus">Dshi_1602</name>
</gene>
<name>RL13_DINSH</name>
<comment type="function">
    <text evidence="1">This protein is one of the early assembly proteins of the 50S ribosomal subunit, although it is not seen to bind rRNA by itself. It is important during the early stages of 50S assembly.</text>
</comment>
<comment type="subunit">
    <text evidence="1">Part of the 50S ribosomal subunit.</text>
</comment>
<comment type="similarity">
    <text evidence="1">Belongs to the universal ribosomal protein uL13 family.</text>
</comment>
<evidence type="ECO:0000255" key="1">
    <source>
        <dbReference type="HAMAP-Rule" id="MF_01366"/>
    </source>
</evidence>
<evidence type="ECO:0000256" key="2">
    <source>
        <dbReference type="SAM" id="MobiDB-lite"/>
    </source>
</evidence>
<evidence type="ECO:0000305" key="3"/>
<keyword id="KW-1185">Reference proteome</keyword>
<keyword id="KW-0687">Ribonucleoprotein</keyword>
<keyword id="KW-0689">Ribosomal protein</keyword>
<protein>
    <recommendedName>
        <fullName evidence="1">Large ribosomal subunit protein uL13</fullName>
    </recommendedName>
    <alternativeName>
        <fullName evidence="3">50S ribosomal protein L13</fullName>
    </alternativeName>
</protein>
<proteinExistence type="inferred from homology"/>
<feature type="chain" id="PRO_1000087087" description="Large ribosomal subunit protein uL13">
    <location>
        <begin position="1"/>
        <end position="152"/>
    </location>
</feature>
<feature type="region of interest" description="Disordered" evidence="2">
    <location>
        <begin position="130"/>
        <end position="152"/>
    </location>
</feature>
<dbReference type="EMBL" id="CP000830">
    <property type="protein sequence ID" value="ABV93344.1"/>
    <property type="molecule type" value="Genomic_DNA"/>
</dbReference>
<dbReference type="RefSeq" id="WP_012178274.1">
    <property type="nucleotide sequence ID" value="NC_009952.1"/>
</dbReference>
<dbReference type="SMR" id="A8LKY0"/>
<dbReference type="STRING" id="398580.Dshi_1602"/>
<dbReference type="KEGG" id="dsh:Dshi_1602"/>
<dbReference type="eggNOG" id="COG0102">
    <property type="taxonomic scope" value="Bacteria"/>
</dbReference>
<dbReference type="HOGENOM" id="CLU_082184_2_0_5"/>
<dbReference type="OrthoDB" id="9801330at2"/>
<dbReference type="Proteomes" id="UP000006833">
    <property type="component" value="Chromosome"/>
</dbReference>
<dbReference type="GO" id="GO:0022625">
    <property type="term" value="C:cytosolic large ribosomal subunit"/>
    <property type="evidence" value="ECO:0007669"/>
    <property type="project" value="TreeGrafter"/>
</dbReference>
<dbReference type="GO" id="GO:0003729">
    <property type="term" value="F:mRNA binding"/>
    <property type="evidence" value="ECO:0007669"/>
    <property type="project" value="TreeGrafter"/>
</dbReference>
<dbReference type="GO" id="GO:0003735">
    <property type="term" value="F:structural constituent of ribosome"/>
    <property type="evidence" value="ECO:0007669"/>
    <property type="project" value="InterPro"/>
</dbReference>
<dbReference type="GO" id="GO:0017148">
    <property type="term" value="P:negative regulation of translation"/>
    <property type="evidence" value="ECO:0007669"/>
    <property type="project" value="TreeGrafter"/>
</dbReference>
<dbReference type="GO" id="GO:0006412">
    <property type="term" value="P:translation"/>
    <property type="evidence" value="ECO:0007669"/>
    <property type="project" value="UniProtKB-UniRule"/>
</dbReference>
<dbReference type="CDD" id="cd00392">
    <property type="entry name" value="Ribosomal_L13"/>
    <property type="match status" value="1"/>
</dbReference>
<dbReference type="FunFam" id="3.90.1180.10:FF:000001">
    <property type="entry name" value="50S ribosomal protein L13"/>
    <property type="match status" value="1"/>
</dbReference>
<dbReference type="Gene3D" id="3.90.1180.10">
    <property type="entry name" value="Ribosomal protein L13"/>
    <property type="match status" value="1"/>
</dbReference>
<dbReference type="HAMAP" id="MF_01366">
    <property type="entry name" value="Ribosomal_uL13"/>
    <property type="match status" value="1"/>
</dbReference>
<dbReference type="InterPro" id="IPR005822">
    <property type="entry name" value="Ribosomal_uL13"/>
</dbReference>
<dbReference type="InterPro" id="IPR005823">
    <property type="entry name" value="Ribosomal_uL13_bac-type"/>
</dbReference>
<dbReference type="InterPro" id="IPR023563">
    <property type="entry name" value="Ribosomal_uL13_CS"/>
</dbReference>
<dbReference type="InterPro" id="IPR036899">
    <property type="entry name" value="Ribosomal_uL13_sf"/>
</dbReference>
<dbReference type="NCBIfam" id="TIGR01066">
    <property type="entry name" value="rplM_bact"/>
    <property type="match status" value="1"/>
</dbReference>
<dbReference type="PANTHER" id="PTHR11545:SF2">
    <property type="entry name" value="LARGE RIBOSOMAL SUBUNIT PROTEIN UL13M"/>
    <property type="match status" value="1"/>
</dbReference>
<dbReference type="PANTHER" id="PTHR11545">
    <property type="entry name" value="RIBOSOMAL PROTEIN L13"/>
    <property type="match status" value="1"/>
</dbReference>
<dbReference type="Pfam" id="PF00572">
    <property type="entry name" value="Ribosomal_L13"/>
    <property type="match status" value="1"/>
</dbReference>
<dbReference type="PIRSF" id="PIRSF002181">
    <property type="entry name" value="Ribosomal_L13"/>
    <property type="match status" value="1"/>
</dbReference>
<dbReference type="SUPFAM" id="SSF52161">
    <property type="entry name" value="Ribosomal protein L13"/>
    <property type="match status" value="1"/>
</dbReference>
<dbReference type="PROSITE" id="PS00783">
    <property type="entry name" value="RIBOSOMAL_L13"/>
    <property type="match status" value="1"/>
</dbReference>
<sequence length="152" mass="16865">MKTFTAKPADIEKKWILIDAEGIVLGRLASIVATRLRGKHKATFTPHMDMGDNVIVINADKIQLTGNKRNKPNYWHTGYPGGIKSRTTGQILEGKFPERVVTQAVKRMLPGGPLSRQQMTNLRVYAGAEHPHEAQSPEVLDLASKNPKNTRS</sequence>
<organism>
    <name type="scientific">Dinoroseobacter shibae (strain DSM 16493 / NCIMB 14021 / DFL 12)</name>
    <dbReference type="NCBI Taxonomy" id="398580"/>
    <lineage>
        <taxon>Bacteria</taxon>
        <taxon>Pseudomonadati</taxon>
        <taxon>Pseudomonadota</taxon>
        <taxon>Alphaproteobacteria</taxon>
        <taxon>Rhodobacterales</taxon>
        <taxon>Roseobacteraceae</taxon>
        <taxon>Dinoroseobacter</taxon>
    </lineage>
</organism>